<proteinExistence type="inferred from homology"/>
<dbReference type="EC" id="2.7.11.33" evidence="1"/>
<dbReference type="EC" id="2.7.4.28" evidence="1"/>
<dbReference type="EMBL" id="CP000712">
    <property type="protein sequence ID" value="ABQ79783.1"/>
    <property type="molecule type" value="Genomic_DNA"/>
</dbReference>
<dbReference type="SMR" id="A5W6M3"/>
<dbReference type="KEGG" id="ppf:Pput_3659"/>
<dbReference type="eggNOG" id="COG1806">
    <property type="taxonomic scope" value="Bacteria"/>
</dbReference>
<dbReference type="HOGENOM" id="CLU_046206_1_0_6"/>
<dbReference type="GO" id="GO:0043531">
    <property type="term" value="F:ADP binding"/>
    <property type="evidence" value="ECO:0007669"/>
    <property type="project" value="UniProtKB-UniRule"/>
</dbReference>
<dbReference type="GO" id="GO:0005524">
    <property type="term" value="F:ATP binding"/>
    <property type="evidence" value="ECO:0007669"/>
    <property type="project" value="InterPro"/>
</dbReference>
<dbReference type="GO" id="GO:0016776">
    <property type="term" value="F:phosphotransferase activity, phosphate group as acceptor"/>
    <property type="evidence" value="ECO:0007669"/>
    <property type="project" value="UniProtKB-UniRule"/>
</dbReference>
<dbReference type="GO" id="GO:0004674">
    <property type="term" value="F:protein serine/threonine kinase activity"/>
    <property type="evidence" value="ECO:0007669"/>
    <property type="project" value="UniProtKB-UniRule"/>
</dbReference>
<dbReference type="HAMAP" id="MF_01062">
    <property type="entry name" value="PSRP"/>
    <property type="match status" value="1"/>
</dbReference>
<dbReference type="InterPro" id="IPR005177">
    <property type="entry name" value="Kinase-pyrophosphorylase"/>
</dbReference>
<dbReference type="InterPro" id="IPR026530">
    <property type="entry name" value="PSRP"/>
</dbReference>
<dbReference type="NCBIfam" id="NF003742">
    <property type="entry name" value="PRK05339.1"/>
    <property type="match status" value="1"/>
</dbReference>
<dbReference type="PANTHER" id="PTHR31756">
    <property type="entry name" value="PYRUVATE, PHOSPHATE DIKINASE REGULATORY PROTEIN 1, CHLOROPLASTIC"/>
    <property type="match status" value="1"/>
</dbReference>
<dbReference type="PANTHER" id="PTHR31756:SF3">
    <property type="entry name" value="PYRUVATE, PHOSPHATE DIKINASE REGULATORY PROTEIN 1, CHLOROPLASTIC"/>
    <property type="match status" value="1"/>
</dbReference>
<dbReference type="Pfam" id="PF03618">
    <property type="entry name" value="Kinase-PPPase"/>
    <property type="match status" value="1"/>
</dbReference>
<comment type="function">
    <text evidence="1">Bifunctional serine/threonine kinase and phosphorylase involved in the regulation of the phosphoenolpyruvate synthase (PEPS) by catalyzing its phosphorylation/dephosphorylation.</text>
</comment>
<comment type="catalytic activity">
    <reaction evidence="1">
        <text>[pyruvate, water dikinase] + ADP = [pyruvate, water dikinase]-phosphate + AMP + H(+)</text>
        <dbReference type="Rhea" id="RHEA:46020"/>
        <dbReference type="Rhea" id="RHEA-COMP:11425"/>
        <dbReference type="Rhea" id="RHEA-COMP:11426"/>
        <dbReference type="ChEBI" id="CHEBI:15378"/>
        <dbReference type="ChEBI" id="CHEBI:43176"/>
        <dbReference type="ChEBI" id="CHEBI:68546"/>
        <dbReference type="ChEBI" id="CHEBI:456215"/>
        <dbReference type="ChEBI" id="CHEBI:456216"/>
        <dbReference type="EC" id="2.7.11.33"/>
    </reaction>
</comment>
<comment type="catalytic activity">
    <reaction evidence="1">
        <text>[pyruvate, water dikinase]-phosphate + phosphate + H(+) = [pyruvate, water dikinase] + diphosphate</text>
        <dbReference type="Rhea" id="RHEA:48580"/>
        <dbReference type="Rhea" id="RHEA-COMP:11425"/>
        <dbReference type="Rhea" id="RHEA-COMP:11426"/>
        <dbReference type="ChEBI" id="CHEBI:15378"/>
        <dbReference type="ChEBI" id="CHEBI:33019"/>
        <dbReference type="ChEBI" id="CHEBI:43176"/>
        <dbReference type="ChEBI" id="CHEBI:43474"/>
        <dbReference type="ChEBI" id="CHEBI:68546"/>
        <dbReference type="EC" id="2.7.4.28"/>
    </reaction>
</comment>
<comment type="similarity">
    <text evidence="1">Belongs to the pyruvate, phosphate/water dikinase regulatory protein family. PSRP subfamily.</text>
</comment>
<organism>
    <name type="scientific">Pseudomonas putida (strain ATCC 700007 / DSM 6899 / JCM 31910 / BCRC 17059 / LMG 24140 / F1)</name>
    <dbReference type="NCBI Taxonomy" id="351746"/>
    <lineage>
        <taxon>Bacteria</taxon>
        <taxon>Pseudomonadati</taxon>
        <taxon>Pseudomonadota</taxon>
        <taxon>Gammaproteobacteria</taxon>
        <taxon>Pseudomonadales</taxon>
        <taxon>Pseudomonadaceae</taxon>
        <taxon>Pseudomonas</taxon>
    </lineage>
</organism>
<gene>
    <name type="ordered locus">Pput_3659</name>
</gene>
<keyword id="KW-0418">Kinase</keyword>
<keyword id="KW-0547">Nucleotide-binding</keyword>
<keyword id="KW-0723">Serine/threonine-protein kinase</keyword>
<keyword id="KW-0808">Transferase</keyword>
<feature type="chain" id="PRO_1000073006" description="Putative phosphoenolpyruvate synthase regulatory protein">
    <location>
        <begin position="1"/>
        <end position="272"/>
    </location>
</feature>
<feature type="binding site" evidence="1">
    <location>
        <begin position="152"/>
        <end position="159"/>
    </location>
    <ligand>
        <name>ADP</name>
        <dbReference type="ChEBI" id="CHEBI:456216"/>
    </ligand>
</feature>
<evidence type="ECO:0000255" key="1">
    <source>
        <dbReference type="HAMAP-Rule" id="MF_01062"/>
    </source>
</evidence>
<accession>A5W6M3</accession>
<protein>
    <recommendedName>
        <fullName evidence="1">Putative phosphoenolpyruvate synthase regulatory protein</fullName>
        <shortName evidence="1">PEP synthase regulatory protein</shortName>
        <shortName evidence="1">PSRP</shortName>
        <ecNumber evidence="1">2.7.11.33</ecNumber>
        <ecNumber evidence="1">2.7.4.28</ecNumber>
    </recommendedName>
    <alternativeName>
        <fullName evidence="1">Pyruvate, water dikinase regulatory protein</fullName>
    </alternativeName>
</protein>
<name>PSRP_PSEP1</name>
<reference key="1">
    <citation type="submission" date="2007-05" db="EMBL/GenBank/DDBJ databases">
        <title>Complete sequence of Pseudomonas putida F1.</title>
        <authorList>
            <consortium name="US DOE Joint Genome Institute"/>
            <person name="Copeland A."/>
            <person name="Lucas S."/>
            <person name="Lapidus A."/>
            <person name="Barry K."/>
            <person name="Detter J.C."/>
            <person name="Glavina del Rio T."/>
            <person name="Hammon N."/>
            <person name="Israni S."/>
            <person name="Dalin E."/>
            <person name="Tice H."/>
            <person name="Pitluck S."/>
            <person name="Chain P."/>
            <person name="Malfatti S."/>
            <person name="Shin M."/>
            <person name="Vergez L."/>
            <person name="Schmutz J."/>
            <person name="Larimer F."/>
            <person name="Land M."/>
            <person name="Hauser L."/>
            <person name="Kyrpides N."/>
            <person name="Lykidis A."/>
            <person name="Parales R."/>
            <person name="Richardson P."/>
        </authorList>
    </citation>
    <scope>NUCLEOTIDE SEQUENCE [LARGE SCALE GENOMIC DNA]</scope>
    <source>
        <strain>ATCC 700007 / DSM 6899 / JCM 31910 / BCRC 17059 / LMG 24140 / F1</strain>
    </source>
</reference>
<sequence length="272" mass="30796">MKRTAFFISDGTGITAETLGQSLLAQFESIPFNKFTRPYIDSPDKARAMVQQINAAAERDGVRPIIFDTIVNQDIREILATSNGFMIDIFSSFLSPLEQELIAHSSYSVGKSHSIGGNSNYMERIEAVNFALDNDDGARTHYYDKADLILVGVSRCGKTPTCLYMAMQFGIRAANYPLTEDDMERLQLPAVLKKHHSKLFGLTIDPDRLTAIRHERKPNSRYSSFAQCEFEVREVESLFRRENIPNINSTHFSVEEISAKILVEKGVERRFK</sequence>